<gene>
    <name type="ordered locus">FPV219</name>
</gene>
<reference key="1">
    <citation type="journal article" date="2000" name="J. Virol.">
        <title>The genome of fowlpox virus.</title>
        <authorList>
            <person name="Afonso C.L."/>
            <person name="Tulman E.R."/>
            <person name="Lu Z."/>
            <person name="Zsak L."/>
            <person name="Kutish G.F."/>
            <person name="Rock D.L."/>
        </authorList>
    </citation>
    <scope>NUCLEOTIDE SEQUENCE [LARGE SCALE GENOMIC DNA]</scope>
</reference>
<feature type="chain" id="PRO_0000067115" description="Putative ankyrin repeat protein FPV219">
    <location>
        <begin position="1"/>
        <end position="434"/>
    </location>
</feature>
<feature type="repeat" description="ANK 1">
    <location>
        <begin position="33"/>
        <end position="62"/>
    </location>
</feature>
<feature type="repeat" description="ANK 2">
    <location>
        <begin position="66"/>
        <end position="95"/>
    </location>
</feature>
<feature type="repeat" description="ANK 3">
    <location>
        <begin position="101"/>
        <end position="131"/>
    </location>
</feature>
<feature type="repeat" description="ANK 4">
    <location>
        <begin position="132"/>
        <end position="161"/>
    </location>
</feature>
<feature type="repeat" description="ANK 5">
    <location>
        <begin position="165"/>
        <end position="195"/>
    </location>
</feature>
<feature type="repeat" description="ANK 6">
    <location>
        <begin position="196"/>
        <end position="225"/>
    </location>
</feature>
<feature type="repeat" description="ANK 7">
    <location>
        <begin position="229"/>
        <end position="258"/>
    </location>
</feature>
<organism>
    <name type="scientific">Fowlpox virus (strain NVSL)</name>
    <name type="common">FPV</name>
    <dbReference type="NCBI Taxonomy" id="928301"/>
    <lineage>
        <taxon>Viruses</taxon>
        <taxon>Varidnaviria</taxon>
        <taxon>Bamfordvirae</taxon>
        <taxon>Nucleocytoviricota</taxon>
        <taxon>Pokkesviricetes</taxon>
        <taxon>Chitovirales</taxon>
        <taxon>Poxviridae</taxon>
        <taxon>Chordopoxvirinae</taxon>
        <taxon>Avipoxvirus</taxon>
        <taxon>Fowlpox virus</taxon>
    </lineage>
</organism>
<organismHost>
    <name type="scientific">Vertebrata</name>
    <dbReference type="NCBI Taxonomy" id="7742"/>
</organismHost>
<dbReference type="EMBL" id="AF198100">
    <property type="protein sequence ID" value="AAF44563.1"/>
    <property type="molecule type" value="Genomic_DNA"/>
</dbReference>
<dbReference type="RefSeq" id="NP_039182.1">
    <property type="nucleotide sequence ID" value="NC_002188.1"/>
</dbReference>
<dbReference type="SMR" id="Q9J516"/>
<dbReference type="GeneID" id="1486791"/>
<dbReference type="KEGG" id="vg:1486791"/>
<dbReference type="Proteomes" id="UP000008597">
    <property type="component" value="Segment"/>
</dbReference>
<dbReference type="GO" id="GO:0004190">
    <property type="term" value="F:aspartic-type endopeptidase activity"/>
    <property type="evidence" value="ECO:0007669"/>
    <property type="project" value="InterPro"/>
</dbReference>
<dbReference type="GO" id="GO:0006508">
    <property type="term" value="P:proteolysis"/>
    <property type="evidence" value="ECO:0007669"/>
    <property type="project" value="InterPro"/>
</dbReference>
<dbReference type="Gene3D" id="1.25.40.20">
    <property type="entry name" value="Ankyrin repeat-containing domain"/>
    <property type="match status" value="2"/>
</dbReference>
<dbReference type="InterPro" id="IPR002110">
    <property type="entry name" value="Ankyrin_rpt"/>
</dbReference>
<dbReference type="InterPro" id="IPR036770">
    <property type="entry name" value="Ankyrin_rpt-contain_sf"/>
</dbReference>
<dbReference type="InterPro" id="IPR001995">
    <property type="entry name" value="Peptidase_A2_cat"/>
</dbReference>
<dbReference type="InterPro" id="IPR018272">
    <property type="entry name" value="PRANC_domain"/>
</dbReference>
<dbReference type="PANTHER" id="PTHR24198">
    <property type="entry name" value="ANKYRIN REPEAT AND PROTEIN KINASE DOMAIN-CONTAINING PROTEIN"/>
    <property type="match status" value="1"/>
</dbReference>
<dbReference type="PANTHER" id="PTHR24198:SF165">
    <property type="entry name" value="ANKYRIN REPEAT-CONTAINING PROTEIN-RELATED"/>
    <property type="match status" value="1"/>
</dbReference>
<dbReference type="Pfam" id="PF00023">
    <property type="entry name" value="Ank"/>
    <property type="match status" value="1"/>
</dbReference>
<dbReference type="Pfam" id="PF12796">
    <property type="entry name" value="Ank_2"/>
    <property type="match status" value="2"/>
</dbReference>
<dbReference type="Pfam" id="PF09372">
    <property type="entry name" value="PRANC"/>
    <property type="match status" value="1"/>
</dbReference>
<dbReference type="PRINTS" id="PR01415">
    <property type="entry name" value="ANKYRIN"/>
</dbReference>
<dbReference type="SMART" id="SM00248">
    <property type="entry name" value="ANK"/>
    <property type="match status" value="7"/>
</dbReference>
<dbReference type="SUPFAM" id="SSF48403">
    <property type="entry name" value="Ankyrin repeat"/>
    <property type="match status" value="1"/>
</dbReference>
<dbReference type="PROSITE" id="PS50297">
    <property type="entry name" value="ANK_REP_REGION"/>
    <property type="match status" value="1"/>
</dbReference>
<dbReference type="PROSITE" id="PS50088">
    <property type="entry name" value="ANK_REPEAT"/>
    <property type="match status" value="5"/>
</dbReference>
<sequence>MKLIEAIDNNNLKEVIRIIRSDNINLESINDEDDLSPLHHAVSRGYKEIVISMLEHGADVNLCNDEVCSPLHIAIKNDNVEMVQLLIDNGADTDCCNNTIHGTPLQCAILNENYRITDALLESGADTHEIYTKNHPIIEAIKLDNLPLVRLLLRHGADVNTFDPLYGYPIHLAIRYGNIDIIKELLYHGVIESYSLYPSLLHQSIMCNNKEVVLLLISMGFDVNAKDNEGNTPMHLAVQKNLVGIVKILLDKGADTSIINNLSVTCLRSCYVYGNNSTEILQLLISRIVINKYANIPCRSIAGMNYNWSLIESNQKTNSYKLECEKEILKMLDVKIGSRSLFDIYLNKIESNMLLRLYNKVTLPEFIIYKDIIINAVYTAKERESLISKSFTVLEDTISNDTIDNLWKNIPIEVKYMILRYLGKDDLYNIVNSV</sequence>
<accession>Q9J516</accession>
<protein>
    <recommendedName>
        <fullName>Putative ankyrin repeat protein FPV219</fullName>
    </recommendedName>
</protein>
<proteinExistence type="predicted"/>
<keyword id="KW-0040">ANK repeat</keyword>
<keyword id="KW-1185">Reference proteome</keyword>
<keyword id="KW-0677">Repeat</keyword>
<name>V219_FOWPN</name>